<feature type="chain" id="PRO_1000094180" description="Transcription elongation factor GreA">
    <location>
        <begin position="1"/>
        <end position="158"/>
    </location>
</feature>
<feature type="coiled-coil region" evidence="1">
    <location>
        <begin position="5"/>
        <end position="75"/>
    </location>
</feature>
<reference key="1">
    <citation type="submission" date="2006-01" db="EMBL/GenBank/DDBJ databases">
        <title>Complete sequence of Novosphingobium aromaticivorans DSM 12444.</title>
        <authorList>
            <consortium name="US DOE Joint Genome Institute"/>
            <person name="Copeland A."/>
            <person name="Lucas S."/>
            <person name="Lapidus A."/>
            <person name="Barry K."/>
            <person name="Detter J.C."/>
            <person name="Glavina T."/>
            <person name="Hammon N."/>
            <person name="Israni S."/>
            <person name="Pitluck S."/>
            <person name="Chain P."/>
            <person name="Malfatti S."/>
            <person name="Shin M."/>
            <person name="Vergez L."/>
            <person name="Schmutz J."/>
            <person name="Larimer F."/>
            <person name="Land M."/>
            <person name="Kyrpides N."/>
            <person name="Ivanova N."/>
            <person name="Fredrickson J."/>
            <person name="Balkwill D."/>
            <person name="Romine M.F."/>
            <person name="Richardson P."/>
        </authorList>
    </citation>
    <scope>NUCLEOTIDE SEQUENCE [LARGE SCALE GENOMIC DNA]</scope>
    <source>
        <strain>ATCC 700278 / DSM 12444 / CCUG 56034 / CIP 105152 / NBRC 16084 / F199</strain>
    </source>
</reference>
<gene>
    <name evidence="1" type="primary">greA</name>
    <name type="ordered locus">Saro_2229</name>
</gene>
<dbReference type="EMBL" id="CP000248">
    <property type="protein sequence ID" value="ABD26667.1"/>
    <property type="molecule type" value="Genomic_DNA"/>
</dbReference>
<dbReference type="RefSeq" id="WP_011445873.1">
    <property type="nucleotide sequence ID" value="NC_007794.1"/>
</dbReference>
<dbReference type="SMR" id="Q2G656"/>
<dbReference type="STRING" id="279238.Saro_2229"/>
<dbReference type="KEGG" id="nar:Saro_2229"/>
<dbReference type="eggNOG" id="COG0782">
    <property type="taxonomic scope" value="Bacteria"/>
</dbReference>
<dbReference type="HOGENOM" id="CLU_101379_2_0_5"/>
<dbReference type="Proteomes" id="UP000009134">
    <property type="component" value="Chromosome"/>
</dbReference>
<dbReference type="GO" id="GO:0003677">
    <property type="term" value="F:DNA binding"/>
    <property type="evidence" value="ECO:0007669"/>
    <property type="project" value="UniProtKB-UniRule"/>
</dbReference>
<dbReference type="GO" id="GO:0070063">
    <property type="term" value="F:RNA polymerase binding"/>
    <property type="evidence" value="ECO:0007669"/>
    <property type="project" value="InterPro"/>
</dbReference>
<dbReference type="GO" id="GO:0006354">
    <property type="term" value="P:DNA-templated transcription elongation"/>
    <property type="evidence" value="ECO:0007669"/>
    <property type="project" value="TreeGrafter"/>
</dbReference>
<dbReference type="GO" id="GO:0032784">
    <property type="term" value="P:regulation of DNA-templated transcription elongation"/>
    <property type="evidence" value="ECO:0007669"/>
    <property type="project" value="UniProtKB-UniRule"/>
</dbReference>
<dbReference type="FunFam" id="1.10.287.180:FF:000001">
    <property type="entry name" value="Transcription elongation factor GreA"/>
    <property type="match status" value="1"/>
</dbReference>
<dbReference type="FunFam" id="3.10.50.30:FF:000001">
    <property type="entry name" value="Transcription elongation factor GreA"/>
    <property type="match status" value="1"/>
</dbReference>
<dbReference type="Gene3D" id="3.10.50.30">
    <property type="entry name" value="Transcription elongation factor, GreA/GreB, C-terminal domain"/>
    <property type="match status" value="1"/>
</dbReference>
<dbReference type="Gene3D" id="1.10.287.180">
    <property type="entry name" value="Transcription elongation factor, GreA/GreB, N-terminal domain"/>
    <property type="match status" value="1"/>
</dbReference>
<dbReference type="HAMAP" id="MF_00105">
    <property type="entry name" value="GreA_GreB"/>
    <property type="match status" value="1"/>
</dbReference>
<dbReference type="InterPro" id="IPR036953">
    <property type="entry name" value="GreA/GreB_C_sf"/>
</dbReference>
<dbReference type="InterPro" id="IPR018151">
    <property type="entry name" value="TF_GreA/GreB_CS"/>
</dbReference>
<dbReference type="InterPro" id="IPR006359">
    <property type="entry name" value="Tscrpt_elong_fac_GreA"/>
</dbReference>
<dbReference type="InterPro" id="IPR028624">
    <property type="entry name" value="Tscrpt_elong_fac_GreA/B"/>
</dbReference>
<dbReference type="InterPro" id="IPR001437">
    <property type="entry name" value="Tscrpt_elong_fac_GreA/B_C"/>
</dbReference>
<dbReference type="InterPro" id="IPR023459">
    <property type="entry name" value="Tscrpt_elong_fac_GreA/B_fam"/>
</dbReference>
<dbReference type="InterPro" id="IPR022691">
    <property type="entry name" value="Tscrpt_elong_fac_GreA/B_N"/>
</dbReference>
<dbReference type="InterPro" id="IPR036805">
    <property type="entry name" value="Tscrpt_elong_fac_GreA/B_N_sf"/>
</dbReference>
<dbReference type="NCBIfam" id="TIGR01462">
    <property type="entry name" value="greA"/>
    <property type="match status" value="1"/>
</dbReference>
<dbReference type="NCBIfam" id="NF001261">
    <property type="entry name" value="PRK00226.1-2"/>
    <property type="match status" value="1"/>
</dbReference>
<dbReference type="NCBIfam" id="NF001263">
    <property type="entry name" value="PRK00226.1-4"/>
    <property type="match status" value="1"/>
</dbReference>
<dbReference type="NCBIfam" id="NF001264">
    <property type="entry name" value="PRK00226.1-5"/>
    <property type="match status" value="1"/>
</dbReference>
<dbReference type="PANTHER" id="PTHR30437">
    <property type="entry name" value="TRANSCRIPTION ELONGATION FACTOR GREA"/>
    <property type="match status" value="1"/>
</dbReference>
<dbReference type="PANTHER" id="PTHR30437:SF4">
    <property type="entry name" value="TRANSCRIPTION ELONGATION FACTOR GREA"/>
    <property type="match status" value="1"/>
</dbReference>
<dbReference type="Pfam" id="PF01272">
    <property type="entry name" value="GreA_GreB"/>
    <property type="match status" value="1"/>
</dbReference>
<dbReference type="Pfam" id="PF03449">
    <property type="entry name" value="GreA_GreB_N"/>
    <property type="match status" value="1"/>
</dbReference>
<dbReference type="PIRSF" id="PIRSF006092">
    <property type="entry name" value="GreA_GreB"/>
    <property type="match status" value="1"/>
</dbReference>
<dbReference type="SUPFAM" id="SSF54534">
    <property type="entry name" value="FKBP-like"/>
    <property type="match status" value="1"/>
</dbReference>
<dbReference type="SUPFAM" id="SSF46557">
    <property type="entry name" value="GreA transcript cleavage protein, N-terminal domain"/>
    <property type="match status" value="1"/>
</dbReference>
<dbReference type="PROSITE" id="PS00829">
    <property type="entry name" value="GREAB_1"/>
    <property type="match status" value="1"/>
</dbReference>
<dbReference type="PROSITE" id="PS00830">
    <property type="entry name" value="GREAB_2"/>
    <property type="match status" value="1"/>
</dbReference>
<protein>
    <recommendedName>
        <fullName evidence="1">Transcription elongation factor GreA</fullName>
    </recommendedName>
    <alternativeName>
        <fullName evidence="1">Transcript cleavage factor GreA</fullName>
    </alternativeName>
</protein>
<organism>
    <name type="scientific">Novosphingobium aromaticivorans (strain ATCC 700278 / DSM 12444 / CCUG 56034 / CIP 105152 / NBRC 16084 / F199)</name>
    <dbReference type="NCBI Taxonomy" id="279238"/>
    <lineage>
        <taxon>Bacteria</taxon>
        <taxon>Pseudomonadati</taxon>
        <taxon>Pseudomonadota</taxon>
        <taxon>Alphaproteobacteria</taxon>
        <taxon>Sphingomonadales</taxon>
        <taxon>Sphingomonadaceae</taxon>
        <taxon>Novosphingobium</taxon>
    </lineage>
</organism>
<proteinExistence type="inferred from homology"/>
<keyword id="KW-0175">Coiled coil</keyword>
<keyword id="KW-0238">DNA-binding</keyword>
<keyword id="KW-1185">Reference proteome</keyword>
<keyword id="KW-0804">Transcription</keyword>
<keyword id="KW-0805">Transcription regulation</keyword>
<sequence>MASVEKLPMLAEGYEKLTAELKALREERPRIVDAIEEARAHGDLSENAEYHAAKERQGQVEATIADLEDRVSRAQIIDPTTLSGDKIIFGATVTLLDDDEKPVKYQIVGPYEADAKKGMISYNSPLGKALIGRKVDEEIEVTVPSGDKFYLVQKIEFI</sequence>
<evidence type="ECO:0000255" key="1">
    <source>
        <dbReference type="HAMAP-Rule" id="MF_00105"/>
    </source>
</evidence>
<accession>Q2G656</accession>
<name>GREA_NOVAD</name>
<comment type="function">
    <text evidence="1">Necessary for efficient RNA polymerase transcription elongation past template-encoded arresting sites. The arresting sites in DNA have the property of trapping a certain fraction of elongating RNA polymerases that pass through, resulting in locked ternary complexes. Cleavage of the nascent transcript by cleavage factors such as GreA or GreB allows the resumption of elongation from the new 3'terminus. GreA releases sequences of 2 to 3 nucleotides.</text>
</comment>
<comment type="similarity">
    <text evidence="1">Belongs to the GreA/GreB family.</text>
</comment>